<name>PYRF_STAEQ</name>
<reference key="1">
    <citation type="journal article" date="2005" name="J. Bacteriol.">
        <title>Insights on evolution of virulence and resistance from the complete genome analysis of an early methicillin-resistant Staphylococcus aureus strain and a biofilm-producing methicillin-resistant Staphylococcus epidermidis strain.</title>
        <authorList>
            <person name="Gill S.R."/>
            <person name="Fouts D.E."/>
            <person name="Archer G.L."/>
            <person name="Mongodin E.F."/>
            <person name="DeBoy R.T."/>
            <person name="Ravel J."/>
            <person name="Paulsen I.T."/>
            <person name="Kolonay J.F."/>
            <person name="Brinkac L.M."/>
            <person name="Beanan M.J."/>
            <person name="Dodson R.J."/>
            <person name="Daugherty S.C."/>
            <person name="Madupu R."/>
            <person name="Angiuoli S.V."/>
            <person name="Durkin A.S."/>
            <person name="Haft D.H."/>
            <person name="Vamathevan J.J."/>
            <person name="Khouri H."/>
            <person name="Utterback T.R."/>
            <person name="Lee C."/>
            <person name="Dimitrov G."/>
            <person name="Jiang L."/>
            <person name="Qin H."/>
            <person name="Weidman J."/>
            <person name="Tran K."/>
            <person name="Kang K.H."/>
            <person name="Hance I.R."/>
            <person name="Nelson K.E."/>
            <person name="Fraser C.M."/>
        </authorList>
    </citation>
    <scope>NUCLEOTIDE SEQUENCE [LARGE SCALE GENOMIC DNA]</scope>
    <source>
        <strain>ATCC 35984 / DSM 28319 / BCRC 17069 / CCUG 31568 / BM 3577 / RP62A</strain>
    </source>
</reference>
<protein>
    <recommendedName>
        <fullName evidence="1">Orotidine 5'-phosphate decarboxylase</fullName>
        <ecNumber evidence="1">4.1.1.23</ecNumber>
    </recommendedName>
    <alternativeName>
        <fullName evidence="1">OMP decarboxylase</fullName>
        <shortName evidence="1">OMPDCase</shortName>
        <shortName evidence="1">OMPdecase</shortName>
    </alternativeName>
</protein>
<gene>
    <name evidence="1" type="primary">pyrF</name>
    <name type="ordered locus">SERP0770</name>
</gene>
<organism>
    <name type="scientific">Staphylococcus epidermidis (strain ATCC 35984 / DSM 28319 / BCRC 17069 / CCUG 31568 / BM 3577 / RP62A)</name>
    <dbReference type="NCBI Taxonomy" id="176279"/>
    <lineage>
        <taxon>Bacteria</taxon>
        <taxon>Bacillati</taxon>
        <taxon>Bacillota</taxon>
        <taxon>Bacilli</taxon>
        <taxon>Bacillales</taxon>
        <taxon>Staphylococcaceae</taxon>
        <taxon>Staphylococcus</taxon>
    </lineage>
</organism>
<sequence>MRNLPIIALDFKSADEVHTFLNKFNEPLCVKIGMELFYQTGPALIKSIKKRGHDIFLDLKLHDIPNTVSKAMEGLARLDIDLVNVHAAGGIKMMEEAKKGLRKHNADIKIIAVTQLTSTTERQLHEEQNIQTSIEEAVLNYARLTKKAGLDGVVCSPLEAKMISKELGSDFLKVTPGIRPKGAARNDQQRITTPEEAKTLGSTHIVVGRPITQSEHPIDSYHKIKESWLS</sequence>
<accession>Q5HPY7</accession>
<comment type="function">
    <text evidence="1">Catalyzes the decarboxylation of orotidine 5'-monophosphate (OMP) to uridine 5'-monophosphate (UMP).</text>
</comment>
<comment type="catalytic activity">
    <reaction evidence="1">
        <text>orotidine 5'-phosphate + H(+) = UMP + CO2</text>
        <dbReference type="Rhea" id="RHEA:11596"/>
        <dbReference type="ChEBI" id="CHEBI:15378"/>
        <dbReference type="ChEBI" id="CHEBI:16526"/>
        <dbReference type="ChEBI" id="CHEBI:57538"/>
        <dbReference type="ChEBI" id="CHEBI:57865"/>
        <dbReference type="EC" id="4.1.1.23"/>
    </reaction>
</comment>
<comment type="pathway">
    <text evidence="1">Pyrimidine metabolism; UMP biosynthesis via de novo pathway; UMP from orotate: step 2/2.</text>
</comment>
<comment type="subunit">
    <text evidence="1">Homodimer.</text>
</comment>
<comment type="similarity">
    <text evidence="1">Belongs to the OMP decarboxylase family. Type 1 subfamily.</text>
</comment>
<feature type="chain" id="PRO_0000134581" description="Orotidine 5'-phosphate decarboxylase">
    <location>
        <begin position="1"/>
        <end position="230"/>
    </location>
</feature>
<feature type="active site" description="Proton donor" evidence="1">
    <location>
        <position position="60"/>
    </location>
</feature>
<feature type="binding site" evidence="1">
    <location>
        <position position="10"/>
    </location>
    <ligand>
        <name>substrate</name>
    </ligand>
</feature>
<feature type="binding site" evidence="1">
    <location>
        <position position="31"/>
    </location>
    <ligand>
        <name>substrate</name>
    </ligand>
</feature>
<feature type="binding site" evidence="1">
    <location>
        <begin position="58"/>
        <end position="67"/>
    </location>
    <ligand>
        <name>substrate</name>
    </ligand>
</feature>
<feature type="binding site" evidence="1">
    <location>
        <position position="117"/>
    </location>
    <ligand>
        <name>substrate</name>
    </ligand>
</feature>
<feature type="binding site" evidence="1">
    <location>
        <position position="179"/>
    </location>
    <ligand>
        <name>substrate</name>
    </ligand>
</feature>
<feature type="binding site" evidence="1">
    <location>
        <position position="188"/>
    </location>
    <ligand>
        <name>substrate</name>
    </ligand>
</feature>
<feature type="binding site" evidence="1">
    <location>
        <position position="208"/>
    </location>
    <ligand>
        <name>substrate</name>
    </ligand>
</feature>
<feature type="binding site" evidence="1">
    <location>
        <position position="209"/>
    </location>
    <ligand>
        <name>substrate</name>
    </ligand>
</feature>
<evidence type="ECO:0000255" key="1">
    <source>
        <dbReference type="HAMAP-Rule" id="MF_01200"/>
    </source>
</evidence>
<keyword id="KW-0210">Decarboxylase</keyword>
<keyword id="KW-0456">Lyase</keyword>
<keyword id="KW-0665">Pyrimidine biosynthesis</keyword>
<keyword id="KW-1185">Reference proteome</keyword>
<proteinExistence type="inferred from homology"/>
<dbReference type="EC" id="4.1.1.23" evidence="1"/>
<dbReference type="EMBL" id="CP000029">
    <property type="protein sequence ID" value="AAW54173.1"/>
    <property type="molecule type" value="Genomic_DNA"/>
</dbReference>
<dbReference type="RefSeq" id="WP_002457397.1">
    <property type="nucleotide sequence ID" value="NC_002976.3"/>
</dbReference>
<dbReference type="SMR" id="Q5HPY7"/>
<dbReference type="STRING" id="176279.SERP0770"/>
<dbReference type="KEGG" id="ser:SERP0770"/>
<dbReference type="eggNOG" id="COG0284">
    <property type="taxonomic scope" value="Bacteria"/>
</dbReference>
<dbReference type="HOGENOM" id="CLU_067069_1_1_9"/>
<dbReference type="UniPathway" id="UPA00070">
    <property type="reaction ID" value="UER00120"/>
</dbReference>
<dbReference type="Proteomes" id="UP000000531">
    <property type="component" value="Chromosome"/>
</dbReference>
<dbReference type="GO" id="GO:0005829">
    <property type="term" value="C:cytosol"/>
    <property type="evidence" value="ECO:0007669"/>
    <property type="project" value="TreeGrafter"/>
</dbReference>
<dbReference type="GO" id="GO:0004590">
    <property type="term" value="F:orotidine-5'-phosphate decarboxylase activity"/>
    <property type="evidence" value="ECO:0007669"/>
    <property type="project" value="UniProtKB-UniRule"/>
</dbReference>
<dbReference type="GO" id="GO:0006207">
    <property type="term" value="P:'de novo' pyrimidine nucleobase biosynthetic process"/>
    <property type="evidence" value="ECO:0007669"/>
    <property type="project" value="InterPro"/>
</dbReference>
<dbReference type="GO" id="GO:0044205">
    <property type="term" value="P:'de novo' UMP biosynthetic process"/>
    <property type="evidence" value="ECO:0007669"/>
    <property type="project" value="UniProtKB-UniRule"/>
</dbReference>
<dbReference type="CDD" id="cd04725">
    <property type="entry name" value="OMP_decarboxylase_like"/>
    <property type="match status" value="1"/>
</dbReference>
<dbReference type="FunFam" id="3.20.20.70:FF:000015">
    <property type="entry name" value="Orotidine 5'-phosphate decarboxylase"/>
    <property type="match status" value="1"/>
</dbReference>
<dbReference type="Gene3D" id="3.20.20.70">
    <property type="entry name" value="Aldolase class I"/>
    <property type="match status" value="1"/>
</dbReference>
<dbReference type="HAMAP" id="MF_01200_B">
    <property type="entry name" value="OMPdecase_type1_B"/>
    <property type="match status" value="1"/>
</dbReference>
<dbReference type="InterPro" id="IPR013785">
    <property type="entry name" value="Aldolase_TIM"/>
</dbReference>
<dbReference type="InterPro" id="IPR014732">
    <property type="entry name" value="OMPdecase"/>
</dbReference>
<dbReference type="InterPro" id="IPR018089">
    <property type="entry name" value="OMPdecase_AS"/>
</dbReference>
<dbReference type="InterPro" id="IPR047596">
    <property type="entry name" value="OMPdecase_bac"/>
</dbReference>
<dbReference type="InterPro" id="IPR001754">
    <property type="entry name" value="OMPdeCOase_dom"/>
</dbReference>
<dbReference type="InterPro" id="IPR011060">
    <property type="entry name" value="RibuloseP-bd_barrel"/>
</dbReference>
<dbReference type="NCBIfam" id="NF001273">
    <property type="entry name" value="PRK00230.1"/>
    <property type="match status" value="1"/>
</dbReference>
<dbReference type="NCBIfam" id="TIGR01740">
    <property type="entry name" value="pyrF"/>
    <property type="match status" value="1"/>
</dbReference>
<dbReference type="PANTHER" id="PTHR32119">
    <property type="entry name" value="OROTIDINE 5'-PHOSPHATE DECARBOXYLASE"/>
    <property type="match status" value="1"/>
</dbReference>
<dbReference type="PANTHER" id="PTHR32119:SF2">
    <property type="entry name" value="OROTIDINE 5'-PHOSPHATE DECARBOXYLASE"/>
    <property type="match status" value="1"/>
</dbReference>
<dbReference type="Pfam" id="PF00215">
    <property type="entry name" value="OMPdecase"/>
    <property type="match status" value="1"/>
</dbReference>
<dbReference type="SMART" id="SM00934">
    <property type="entry name" value="OMPdecase"/>
    <property type="match status" value="1"/>
</dbReference>
<dbReference type="SUPFAM" id="SSF51366">
    <property type="entry name" value="Ribulose-phoshate binding barrel"/>
    <property type="match status" value="1"/>
</dbReference>
<dbReference type="PROSITE" id="PS00156">
    <property type="entry name" value="OMPDECASE"/>
    <property type="match status" value="1"/>
</dbReference>